<evidence type="ECO:0000250" key="1"/>
<evidence type="ECO:0000256" key="2">
    <source>
        <dbReference type="SAM" id="MobiDB-lite"/>
    </source>
</evidence>
<evidence type="ECO:0000305" key="3"/>
<organism>
    <name type="scientific">Solanum lycopersicum</name>
    <name type="common">Tomato</name>
    <name type="synonym">Lycopersicon esculentum</name>
    <dbReference type="NCBI Taxonomy" id="4081"/>
    <lineage>
        <taxon>Eukaryota</taxon>
        <taxon>Viridiplantae</taxon>
        <taxon>Streptophyta</taxon>
        <taxon>Embryophyta</taxon>
        <taxon>Tracheophyta</taxon>
        <taxon>Spermatophyta</taxon>
        <taxon>Magnoliopsida</taxon>
        <taxon>eudicotyledons</taxon>
        <taxon>Gunneridae</taxon>
        <taxon>Pentapetalae</taxon>
        <taxon>asterids</taxon>
        <taxon>lamiids</taxon>
        <taxon>Solanales</taxon>
        <taxon>Solanaceae</taxon>
        <taxon>Solanoideae</taxon>
        <taxon>Solaneae</taxon>
        <taxon>Solanum</taxon>
        <taxon>Solanum subgen. Lycopersicon</taxon>
    </lineage>
</organism>
<accession>Q9ZS45</accession>
<feature type="chain" id="PRO_0000156455" description="Spermidine synthase">
    <location>
        <begin position="1"/>
        <end position="342"/>
    </location>
</feature>
<feature type="domain" description="PABS">
    <location>
        <begin position="52"/>
        <end position="289"/>
    </location>
</feature>
<feature type="region of interest" description="Disordered" evidence="2">
    <location>
        <begin position="9"/>
        <end position="42"/>
    </location>
</feature>
<feature type="active site" description="Proton acceptor" evidence="1">
    <location>
        <position position="208"/>
    </location>
</feature>
<feature type="binding site" evidence="1">
    <location>
        <position position="83"/>
    </location>
    <ligand>
        <name>S-adenosyl 3-(methylsulfanyl)propylamine</name>
        <dbReference type="ChEBI" id="CHEBI:57443"/>
    </ligand>
</feature>
<feature type="binding site" evidence="1">
    <location>
        <position position="113"/>
    </location>
    <ligand>
        <name>putrescine</name>
        <dbReference type="ChEBI" id="CHEBI:326268"/>
    </ligand>
</feature>
<feature type="binding site" evidence="1">
    <location>
        <position position="114"/>
    </location>
    <ligand>
        <name>S-adenosyl 3-(methylsulfanyl)propylamine</name>
        <dbReference type="ChEBI" id="CHEBI:57443"/>
    </ligand>
</feature>
<feature type="binding site" evidence="1">
    <location>
        <position position="138"/>
    </location>
    <ligand>
        <name>S-adenosyl 3-(methylsulfanyl)propylamine</name>
        <dbReference type="ChEBI" id="CHEBI:57443"/>
    </ligand>
</feature>
<feature type="binding site" evidence="1">
    <location>
        <position position="158"/>
    </location>
    <ligand>
        <name>S-adenosyl 3-(methylsulfanyl)propylamine</name>
        <dbReference type="ChEBI" id="CHEBI:57443"/>
    </ligand>
</feature>
<feature type="binding site" evidence="1">
    <location>
        <begin position="189"/>
        <end position="190"/>
    </location>
    <ligand>
        <name>S-adenosyl 3-(methylsulfanyl)propylamine</name>
        <dbReference type="ChEBI" id="CHEBI:57443"/>
    </ligand>
</feature>
<feature type="binding site" evidence="1">
    <location>
        <begin position="208"/>
        <end position="211"/>
    </location>
    <ligand>
        <name>putrescine</name>
        <dbReference type="ChEBI" id="CHEBI:326268"/>
    </ligand>
</feature>
<feature type="binding site" evidence="1">
    <location>
        <position position="208"/>
    </location>
    <ligand>
        <name>S-adenosyl 3-(methylsulfanyl)propylamine</name>
        <dbReference type="ChEBI" id="CHEBI:57443"/>
    </ligand>
</feature>
<feature type="binding site" evidence="1">
    <location>
        <position position="277"/>
    </location>
    <ligand>
        <name>putrescine</name>
        <dbReference type="ChEBI" id="CHEBI:326268"/>
    </ligand>
</feature>
<gene>
    <name type="primary">SPDSYN</name>
</gene>
<proteinExistence type="evidence at transcript level"/>
<keyword id="KW-0620">Polyamine biosynthesis</keyword>
<keyword id="KW-1185">Reference proteome</keyword>
<keyword id="KW-0745">Spermidine biosynthesis</keyword>
<keyword id="KW-0808">Transferase</keyword>
<comment type="catalytic activity">
    <reaction>
        <text>S-adenosyl 3-(methylsulfanyl)propylamine + putrescine = S-methyl-5'-thioadenosine + spermidine + H(+)</text>
        <dbReference type="Rhea" id="RHEA:12721"/>
        <dbReference type="ChEBI" id="CHEBI:15378"/>
        <dbReference type="ChEBI" id="CHEBI:17509"/>
        <dbReference type="ChEBI" id="CHEBI:57443"/>
        <dbReference type="ChEBI" id="CHEBI:57834"/>
        <dbReference type="ChEBI" id="CHEBI:326268"/>
        <dbReference type="EC" id="2.5.1.16"/>
    </reaction>
</comment>
<comment type="pathway">
    <text>Amine and polyamine biosynthesis; spermidine biosynthesis; spermidine from putrescine: step 1/1.</text>
</comment>
<comment type="similarity">
    <text evidence="3">Belongs to the spermidine/spermine synthase family.</text>
</comment>
<reference key="1">
    <citation type="online journal article" date="1999" name="Plant Gene Register">
        <title>Molecular cloning and characterization of a tomato (Lycopersicon esculentum Mill.) spermidine synthase cDNA.</title>
        <authorList>
            <person name="Alabadi D."/>
            <person name="Carbonell J."/>
        </authorList>
        <locator>PGR99-103</locator>
    </citation>
    <scope>NUCLEOTIDE SEQUENCE [MRNA]</scope>
    <source>
        <strain>cv. Rutgers</strain>
    </source>
</reference>
<sequence>MADECAAFMKGTELPVKRPREEEAETEMEAANNSNNGCEKEESSPYISSVLPGWFSEISPLWPGEAHSLKVEKILFQGKSDYQNVLVFQSSTYGKVLVLDGVIQLTERDECAYQEMITHLPLCSIPNPKKVLVIGGGDGGVLREVSRHSSVEQIDICEIDKMVVEVAKQFFPDVAVGYEDPRVNLHIGDGVAFLKNVPAGTYDAVIVDSSDPIGPAQELFEKPFFESIAKALRPGGVVSTQAESIWLHMHIIEEIVANCRQIFKGSVNYAWTTVPTYPSGMIGFMLCSTEGPAVDFKNPINPIDDESPAKSIEPLKFYNSEIHQASFCLPSFAKRVIETKGK</sequence>
<dbReference type="EC" id="2.5.1.16"/>
<dbReference type="EMBL" id="AJ006414">
    <property type="protein sequence ID" value="CAA07020.1"/>
    <property type="molecule type" value="mRNA"/>
</dbReference>
<dbReference type="RefSeq" id="NP_001234493.1">
    <property type="nucleotide sequence ID" value="NM_001247564.2"/>
</dbReference>
<dbReference type="SMR" id="Q9ZS45"/>
<dbReference type="FunCoup" id="Q9ZS45">
    <property type="interactions" value="3163"/>
</dbReference>
<dbReference type="STRING" id="4081.Q9ZS45"/>
<dbReference type="PaxDb" id="4081-Solyc05g005710.2.1"/>
<dbReference type="EnsemblPlants" id="Solyc05g005710.3.1">
    <property type="protein sequence ID" value="Solyc05g005710.3.1"/>
    <property type="gene ID" value="Solyc05g005710.3"/>
</dbReference>
<dbReference type="GeneID" id="544177"/>
<dbReference type="Gramene" id="Solyc05g005710.3.1">
    <property type="protein sequence ID" value="Solyc05g005710.3.1"/>
    <property type="gene ID" value="Solyc05g005710.3"/>
</dbReference>
<dbReference type="KEGG" id="sly:544177"/>
<dbReference type="eggNOG" id="KOG1562">
    <property type="taxonomic scope" value="Eukaryota"/>
</dbReference>
<dbReference type="HOGENOM" id="CLU_048199_3_2_1"/>
<dbReference type="InParanoid" id="Q9ZS45"/>
<dbReference type="OMA" id="EYTIEAK"/>
<dbReference type="OrthoDB" id="38125at2759"/>
<dbReference type="PhylomeDB" id="Q9ZS45"/>
<dbReference type="UniPathway" id="UPA00248">
    <property type="reaction ID" value="UER00314"/>
</dbReference>
<dbReference type="Proteomes" id="UP000004994">
    <property type="component" value="Chromosome 5"/>
</dbReference>
<dbReference type="ExpressionAtlas" id="Q9ZS45">
    <property type="expression patterns" value="baseline and differential"/>
</dbReference>
<dbReference type="GO" id="GO:0005829">
    <property type="term" value="C:cytosol"/>
    <property type="evidence" value="ECO:0000318"/>
    <property type="project" value="GO_Central"/>
</dbReference>
<dbReference type="GO" id="GO:0004766">
    <property type="term" value="F:spermidine synthase activity"/>
    <property type="evidence" value="ECO:0000318"/>
    <property type="project" value="GO_Central"/>
</dbReference>
<dbReference type="GO" id="GO:0008295">
    <property type="term" value="P:spermidine biosynthetic process"/>
    <property type="evidence" value="ECO:0000318"/>
    <property type="project" value="GO_Central"/>
</dbReference>
<dbReference type="CDD" id="cd02440">
    <property type="entry name" value="AdoMet_MTases"/>
    <property type="match status" value="1"/>
</dbReference>
<dbReference type="FunFam" id="2.30.140.10:FF:000003">
    <property type="entry name" value="Spermidine synthase 1"/>
    <property type="match status" value="1"/>
</dbReference>
<dbReference type="FunFam" id="3.40.50.150:FF:000048">
    <property type="entry name" value="Spermidine synthase 1"/>
    <property type="match status" value="1"/>
</dbReference>
<dbReference type="Gene3D" id="2.30.140.10">
    <property type="entry name" value="Spermidine synthase, tetramerisation domain"/>
    <property type="match status" value="1"/>
</dbReference>
<dbReference type="Gene3D" id="3.40.50.150">
    <property type="entry name" value="Vaccinia Virus protein VP39"/>
    <property type="match status" value="1"/>
</dbReference>
<dbReference type="HAMAP" id="MF_00198">
    <property type="entry name" value="Spermidine_synth"/>
    <property type="match status" value="1"/>
</dbReference>
<dbReference type="InterPro" id="IPR030374">
    <property type="entry name" value="PABS"/>
</dbReference>
<dbReference type="InterPro" id="IPR030373">
    <property type="entry name" value="PABS_CS"/>
</dbReference>
<dbReference type="InterPro" id="IPR029063">
    <property type="entry name" value="SAM-dependent_MTases_sf"/>
</dbReference>
<dbReference type="InterPro" id="IPR001045">
    <property type="entry name" value="Spermi_synthase"/>
</dbReference>
<dbReference type="InterPro" id="IPR030668">
    <property type="entry name" value="Spermi_synthase_euk"/>
</dbReference>
<dbReference type="InterPro" id="IPR035246">
    <property type="entry name" value="Spermidine_synt_N"/>
</dbReference>
<dbReference type="InterPro" id="IPR037163">
    <property type="entry name" value="Spermidine_synt_N_sf"/>
</dbReference>
<dbReference type="NCBIfam" id="NF002010">
    <property type="entry name" value="PRK00811.1"/>
    <property type="match status" value="1"/>
</dbReference>
<dbReference type="NCBIfam" id="TIGR00417">
    <property type="entry name" value="speE"/>
    <property type="match status" value="1"/>
</dbReference>
<dbReference type="PANTHER" id="PTHR11558:SF43">
    <property type="entry name" value="SPERMIDINE SYNTHASE"/>
    <property type="match status" value="1"/>
</dbReference>
<dbReference type="PANTHER" id="PTHR11558">
    <property type="entry name" value="SPERMIDINE/SPERMINE SYNTHASE"/>
    <property type="match status" value="1"/>
</dbReference>
<dbReference type="Pfam" id="PF17284">
    <property type="entry name" value="Spermine_synt_N"/>
    <property type="match status" value="1"/>
</dbReference>
<dbReference type="Pfam" id="PF01564">
    <property type="entry name" value="Spermine_synth"/>
    <property type="match status" value="1"/>
</dbReference>
<dbReference type="PIRSF" id="PIRSF000502">
    <property type="entry name" value="Spermidine_synth"/>
    <property type="match status" value="1"/>
</dbReference>
<dbReference type="SUPFAM" id="SSF53335">
    <property type="entry name" value="S-adenosyl-L-methionine-dependent methyltransferases"/>
    <property type="match status" value="1"/>
</dbReference>
<dbReference type="PROSITE" id="PS01330">
    <property type="entry name" value="PABS_1"/>
    <property type="match status" value="1"/>
</dbReference>
<dbReference type="PROSITE" id="PS51006">
    <property type="entry name" value="PABS_2"/>
    <property type="match status" value="1"/>
</dbReference>
<protein>
    <recommendedName>
        <fullName>Spermidine synthase</fullName>
        <shortName>SPDSY</shortName>
        <ecNumber>2.5.1.16</ecNumber>
    </recommendedName>
    <alternativeName>
        <fullName>Putrescine aminopropyltransferase</fullName>
    </alternativeName>
</protein>
<name>SPDE_SOLLC</name>